<keyword id="KW-0106">Calcium</keyword>
<keyword id="KW-0131">Cell cycle</keyword>
<keyword id="KW-0132">Cell division</keyword>
<keyword id="KW-0159">Chromosome partition</keyword>
<keyword id="KW-0963">Cytoplasm</keyword>
<keyword id="KW-0226">DNA condensation</keyword>
<feature type="chain" id="PRO_1000088224" description="Chromosome partition protein MukF">
    <location>
        <begin position="1"/>
        <end position="440"/>
    </location>
</feature>
<feature type="region of interest" description="Leucine-zipper">
    <location>
        <begin position="208"/>
        <end position="236"/>
    </location>
</feature>
<protein>
    <recommendedName>
        <fullName evidence="1">Chromosome partition protein MukF</fullName>
    </recommendedName>
</protein>
<gene>
    <name evidence="1" type="primary">mukF</name>
    <name type="ordered locus">HSM_1339</name>
</gene>
<accession>B0UU62</accession>
<reference key="1">
    <citation type="submission" date="2008-02" db="EMBL/GenBank/DDBJ databases">
        <title>Complete sequence of Haemophilus somnus 2336.</title>
        <authorList>
            <consortium name="US DOE Joint Genome Institute"/>
            <person name="Siddaramappa S."/>
            <person name="Duncan A.J."/>
            <person name="Challacombe J.F."/>
            <person name="Rainey D."/>
            <person name="Gillaspy A.F."/>
            <person name="Carson M."/>
            <person name="Gipson J."/>
            <person name="Gipson M."/>
            <person name="Bruce D."/>
            <person name="Detter J.C."/>
            <person name="Han C.S."/>
            <person name="Land M."/>
            <person name="Tapia R."/>
            <person name="Thompson L.S."/>
            <person name="Orvis J."/>
            <person name="Zaitshik J."/>
            <person name="Barnes G."/>
            <person name="Brettin T.S."/>
            <person name="Dyer D.W."/>
            <person name="Inzana T.J."/>
        </authorList>
    </citation>
    <scope>NUCLEOTIDE SEQUENCE [LARGE SCALE GENOMIC DNA]</scope>
    <source>
        <strain>2336</strain>
    </source>
</reference>
<comment type="function">
    <text evidence="1">Involved in chromosome condensation, segregation and cell cycle progression. May participate in facilitating chromosome segregation by condensation DNA from both sides of a centrally located replisome during cell division. Not required for mini-F plasmid partitioning. Probably acts via its interaction with MukB and MukE. Overexpression results in anucleate cells. It has a calcium binding activity.</text>
</comment>
<comment type="subunit">
    <text evidence="1">Interacts, and probably forms a ternary complex, with MukE and MukB via its C-terminal region. The complex formation is stimulated by calcium or magnesium. It is required for an interaction between MukE and MukB.</text>
</comment>
<comment type="subcellular location">
    <subcellularLocation>
        <location evidence="1">Cytoplasm</location>
        <location evidence="1">Nucleoid</location>
    </subcellularLocation>
    <text evidence="1">Restricted to the nucleoid region.</text>
</comment>
<comment type="similarity">
    <text evidence="1">Belongs to the MukF family.</text>
</comment>
<name>MUKF_HISS2</name>
<evidence type="ECO:0000255" key="1">
    <source>
        <dbReference type="HAMAP-Rule" id="MF_01803"/>
    </source>
</evidence>
<proteinExistence type="inferred from homology"/>
<organism>
    <name type="scientific">Histophilus somni (strain 2336)</name>
    <name type="common">Haemophilus somnus</name>
    <dbReference type="NCBI Taxonomy" id="228400"/>
    <lineage>
        <taxon>Bacteria</taxon>
        <taxon>Pseudomonadati</taxon>
        <taxon>Pseudomonadota</taxon>
        <taxon>Gammaproteobacteria</taxon>
        <taxon>Pasteurellales</taxon>
        <taxon>Pasteurellaceae</taxon>
        <taxon>Histophilus</taxon>
    </lineage>
</organism>
<dbReference type="EMBL" id="CP000947">
    <property type="protein sequence ID" value="ACA31075.1"/>
    <property type="molecule type" value="Genomic_DNA"/>
</dbReference>
<dbReference type="RefSeq" id="WP_012340494.1">
    <property type="nucleotide sequence ID" value="NC_010519.1"/>
</dbReference>
<dbReference type="SMR" id="B0UU62"/>
<dbReference type="STRING" id="228400.HSM_1339"/>
<dbReference type="GeneID" id="31487641"/>
<dbReference type="KEGG" id="hsm:HSM_1339"/>
<dbReference type="HOGENOM" id="CLU_049853_0_0_6"/>
<dbReference type="GO" id="GO:0005737">
    <property type="term" value="C:cytoplasm"/>
    <property type="evidence" value="ECO:0007669"/>
    <property type="project" value="UniProtKB-UniRule"/>
</dbReference>
<dbReference type="GO" id="GO:0009295">
    <property type="term" value="C:nucleoid"/>
    <property type="evidence" value="ECO:0007669"/>
    <property type="project" value="UniProtKB-SubCell"/>
</dbReference>
<dbReference type="GO" id="GO:0005509">
    <property type="term" value="F:calcium ion binding"/>
    <property type="evidence" value="ECO:0007669"/>
    <property type="project" value="UniProtKB-UniRule"/>
</dbReference>
<dbReference type="GO" id="GO:0051301">
    <property type="term" value="P:cell division"/>
    <property type="evidence" value="ECO:0007669"/>
    <property type="project" value="UniProtKB-KW"/>
</dbReference>
<dbReference type="GO" id="GO:0030261">
    <property type="term" value="P:chromosome condensation"/>
    <property type="evidence" value="ECO:0007669"/>
    <property type="project" value="UniProtKB-KW"/>
</dbReference>
<dbReference type="GO" id="GO:0007059">
    <property type="term" value="P:chromosome segregation"/>
    <property type="evidence" value="ECO:0007669"/>
    <property type="project" value="UniProtKB-UniRule"/>
</dbReference>
<dbReference type="GO" id="GO:0006260">
    <property type="term" value="P:DNA replication"/>
    <property type="evidence" value="ECO:0007669"/>
    <property type="project" value="UniProtKB-UniRule"/>
</dbReference>
<dbReference type="CDD" id="cd16337">
    <property type="entry name" value="MukF_C"/>
    <property type="match status" value="1"/>
</dbReference>
<dbReference type="CDD" id="cd16335">
    <property type="entry name" value="MukF_N"/>
    <property type="match status" value="1"/>
</dbReference>
<dbReference type="Gene3D" id="1.20.58.590">
    <property type="entry name" value="Chromosome partition protein MukF, middle domain"/>
    <property type="match status" value="1"/>
</dbReference>
<dbReference type="Gene3D" id="1.10.225.40">
    <property type="entry name" value="MukF, C-terminal domain"/>
    <property type="match status" value="1"/>
</dbReference>
<dbReference type="Gene3D" id="1.10.10.10">
    <property type="entry name" value="Winged helix-like DNA-binding domain superfamily/Winged helix DNA-binding domain"/>
    <property type="match status" value="1"/>
</dbReference>
<dbReference type="HAMAP" id="MF_01803">
    <property type="entry name" value="MukF"/>
    <property type="match status" value="1"/>
</dbReference>
<dbReference type="InterPro" id="IPR005582">
    <property type="entry name" value="Chromosome_partition_MukF"/>
</dbReference>
<dbReference type="InterPro" id="IPR033441">
    <property type="entry name" value="MukF_C"/>
</dbReference>
<dbReference type="InterPro" id="IPR038198">
    <property type="entry name" value="MukF_C_sf"/>
</dbReference>
<dbReference type="InterPro" id="IPR033440">
    <property type="entry name" value="MukF_M"/>
</dbReference>
<dbReference type="InterPro" id="IPR036141">
    <property type="entry name" value="MukF_M_sp"/>
</dbReference>
<dbReference type="InterPro" id="IPR033439">
    <property type="entry name" value="MukF_WHTH"/>
</dbReference>
<dbReference type="InterPro" id="IPR036388">
    <property type="entry name" value="WH-like_DNA-bd_sf"/>
</dbReference>
<dbReference type="InterPro" id="IPR036390">
    <property type="entry name" value="WH_DNA-bd_sf"/>
</dbReference>
<dbReference type="NCBIfam" id="NF003615">
    <property type="entry name" value="PRK05260.1"/>
    <property type="match status" value="1"/>
</dbReference>
<dbReference type="Pfam" id="PF03882">
    <property type="entry name" value="KicB"/>
    <property type="match status" value="1"/>
</dbReference>
<dbReference type="Pfam" id="PF17193">
    <property type="entry name" value="MukF_C"/>
    <property type="match status" value="1"/>
</dbReference>
<dbReference type="Pfam" id="PF17192">
    <property type="entry name" value="MukF_M"/>
    <property type="match status" value="1"/>
</dbReference>
<dbReference type="PIRSF" id="PIRSF018282">
    <property type="entry name" value="MukF"/>
    <property type="match status" value="1"/>
</dbReference>
<dbReference type="SUPFAM" id="SSF140570">
    <property type="entry name" value="MukF C-terminal domain-like"/>
    <property type="match status" value="1"/>
</dbReference>
<dbReference type="SUPFAM" id="SSF46785">
    <property type="entry name" value="Winged helix' DNA-binding domain"/>
    <property type="match status" value="1"/>
</dbReference>
<sequence>MLETSQTIPELVNWTREREFSLSLSTERLAFLLAIAIYNNERLDGEMLETDLIDIFRHISNTFEQSAETVSTRANNSINELVKQRFLNRFSSEFTEGLSIYRLTPLGVGVSDYYIRQREFSALRLSVQLSIVADEIQRASESAEEGGDEHYWRKNVFAPLKYSVAEIFDSIDLSQRMMDENQQHIKEEIAELLTKDWQTAIASCERLLDETSGNLRELQDTLNAAGDKLQSQLLRIQDCVIGHDNLYFVEQLIVDLQAKLDRIISWGQQAIDLWIGYDRHVHKFIRTAIDLDKNRVFSQRLRQSIHHYFDHPWFLWIAQAERLIDLREEELTLREEEALGELPEELQYESLADLHEQIVETMQSLLIEYRLQNTPIDLSEVLTAQLKQYPLANHFDIARIIIDQAVRLGLAQDDLNGIYPNWRSINENGAEVQAHVIDKY</sequence>